<proteinExistence type="inferred from homology"/>
<dbReference type="EMBL" id="J03216">
    <property type="status" value="NOT_ANNOTATED_CDS"/>
    <property type="molecule type" value="Genomic_DNA"/>
</dbReference>
<dbReference type="PIR" id="S00787">
    <property type="entry name" value="BXAG55"/>
</dbReference>
<dbReference type="RefSeq" id="NP_059809.1">
    <property type="nucleotide sequence ID" value="NC_002377.1"/>
</dbReference>
<dbReference type="RefSeq" id="WP_010892497.1">
    <property type="nucleotide sequence ID" value="NZ_QSNU01000012.1"/>
</dbReference>
<dbReference type="SMR" id="P0A3F8"/>
<dbReference type="DIP" id="DIP-29960N"/>
<dbReference type="IntAct" id="P0A3F8">
    <property type="interactions" value="1"/>
</dbReference>
<dbReference type="TCDB" id="3.A.7.1.1">
    <property type="family name" value="the type iv (conjugal dna-protein transfer or virb) secretory pathway (ivsp) family"/>
</dbReference>
<dbReference type="OrthoDB" id="9810761at2"/>
<dbReference type="GO" id="GO:0005737">
    <property type="term" value="C:cytoplasm"/>
    <property type="evidence" value="ECO:0007669"/>
    <property type="project" value="UniProtKB-SubCell"/>
</dbReference>
<dbReference type="GO" id="GO:0043684">
    <property type="term" value="C:type IV secretion system complex"/>
    <property type="evidence" value="ECO:0007669"/>
    <property type="project" value="InterPro"/>
</dbReference>
<dbReference type="GO" id="GO:0005524">
    <property type="term" value="F:ATP binding"/>
    <property type="evidence" value="ECO:0007669"/>
    <property type="project" value="UniProtKB-KW"/>
</dbReference>
<dbReference type="GO" id="GO:0016887">
    <property type="term" value="F:ATP hydrolysis activity"/>
    <property type="evidence" value="ECO:0007669"/>
    <property type="project" value="InterPro"/>
</dbReference>
<dbReference type="GO" id="GO:0044097">
    <property type="term" value="P:secretion by the type IV secretion system"/>
    <property type="evidence" value="ECO:0007669"/>
    <property type="project" value="InterPro"/>
</dbReference>
<dbReference type="CDD" id="cd01130">
    <property type="entry name" value="VirB11-like_ATPase"/>
    <property type="match status" value="1"/>
</dbReference>
<dbReference type="Gene3D" id="3.30.450.90">
    <property type="match status" value="1"/>
</dbReference>
<dbReference type="Gene3D" id="3.40.50.300">
    <property type="entry name" value="P-loop containing nucleotide triphosphate hydrolases"/>
    <property type="match status" value="1"/>
</dbReference>
<dbReference type="InterPro" id="IPR027417">
    <property type="entry name" value="P-loop_NTPase"/>
</dbReference>
<dbReference type="InterPro" id="IPR001482">
    <property type="entry name" value="T2SS/T4SS_dom"/>
</dbReference>
<dbReference type="InterPro" id="IPR050921">
    <property type="entry name" value="T4SS_GSP_E_ATPase"/>
</dbReference>
<dbReference type="InterPro" id="IPR014155">
    <property type="entry name" value="VirB11"/>
</dbReference>
<dbReference type="NCBIfam" id="NF010425">
    <property type="entry name" value="PRK13851.1"/>
    <property type="match status" value="1"/>
</dbReference>
<dbReference type="NCBIfam" id="TIGR02788">
    <property type="entry name" value="VirB11"/>
    <property type="match status" value="1"/>
</dbReference>
<dbReference type="PANTHER" id="PTHR30486">
    <property type="entry name" value="TWITCHING MOTILITY PROTEIN PILT"/>
    <property type="match status" value="1"/>
</dbReference>
<dbReference type="PANTHER" id="PTHR30486:SF6">
    <property type="entry name" value="TYPE IV PILUS RETRACTATION ATPASE PILT"/>
    <property type="match status" value="1"/>
</dbReference>
<dbReference type="Pfam" id="PF00437">
    <property type="entry name" value="T2SSE"/>
    <property type="match status" value="1"/>
</dbReference>
<dbReference type="SUPFAM" id="SSF52540">
    <property type="entry name" value="P-loop containing nucleoside triphosphate hydrolases"/>
    <property type="match status" value="1"/>
</dbReference>
<dbReference type="PROSITE" id="PS00662">
    <property type="entry name" value="T2SP_E"/>
    <property type="match status" value="1"/>
</dbReference>
<organism>
    <name type="scientific">Rhizobium radiobacter</name>
    <name type="common">Agrobacterium tumefaciens</name>
    <name type="synonym">Agrobacterium radiobacter</name>
    <dbReference type="NCBI Taxonomy" id="358"/>
    <lineage>
        <taxon>Bacteria</taxon>
        <taxon>Pseudomonadati</taxon>
        <taxon>Pseudomonadota</taxon>
        <taxon>Alphaproteobacteria</taxon>
        <taxon>Hyphomicrobiales</taxon>
        <taxon>Rhizobiaceae</taxon>
        <taxon>Rhizobium/Agrobacterium group</taxon>
        <taxon>Agrobacterium</taxon>
        <taxon>Agrobacterium tumefaciens complex</taxon>
    </lineage>
</organism>
<protein>
    <recommendedName>
        <fullName>Protein VirB11</fullName>
    </recommendedName>
</protein>
<feature type="chain" id="PRO_0000207303" description="Protein VirB11">
    <location>
        <begin position="1"/>
        <end position="343"/>
    </location>
</feature>
<feature type="binding site" evidence="1">
    <location>
        <begin position="169"/>
        <end position="176"/>
    </location>
    <ligand>
        <name>ATP</name>
        <dbReference type="ChEBI" id="CHEBI:30616"/>
    </ligand>
</feature>
<keyword id="KW-0067">ATP-binding</keyword>
<keyword id="KW-0192">Crown gall tumor</keyword>
<keyword id="KW-0963">Cytoplasm</keyword>
<keyword id="KW-0547">Nucleotide-binding</keyword>
<keyword id="KW-0597">Phosphoprotein</keyword>
<keyword id="KW-0614">Plasmid</keyword>
<keyword id="KW-0813">Transport</keyword>
<evidence type="ECO:0000255" key="1"/>
<evidence type="ECO:0000269" key="2">
    <source>
    </source>
</evidence>
<evidence type="ECO:0000305" key="3"/>
<reference key="1">
    <citation type="journal article" date="1988" name="J. Biol. Chem.">
        <title>Characterization of the virB operon from an Agrobacterium tumefaciens Ti plasmid.</title>
        <authorList>
            <person name="Ward J.E."/>
            <person name="Akiyoshi D.E."/>
            <person name="Regier D."/>
            <person name="Datta A."/>
            <person name="Gordon M.P."/>
            <person name="Nester E.W."/>
        </authorList>
    </citation>
    <scope>NUCLEOTIDE SEQUENCE [GENOMIC DNA]</scope>
</reference>
<reference key="2">
    <citation type="journal article" date="1989" name="Proc. Natl. Acad. Sci. U.S.A.">
        <title>A gene required for transfer of T-DNA to plants encodes an ATPase with autophosphorylating activity.</title>
        <authorList>
            <person name="Christie P.J."/>
            <person name="Ward J.E. Jr."/>
            <person name="Gordon M.P."/>
            <person name="Nester E.W."/>
        </authorList>
    </citation>
    <scope>FUNCTION</scope>
</reference>
<gene>
    <name type="primary">virB11</name>
</gene>
<sequence length="343" mass="38009">MEVDPQLRFLLKPILEWLDDPKTEEIAINRPGEAFVRQAGIFTKMPLPVSYDDLEDIAILAGALRKQDVGPRNPLCATELPGGERLQICLPPTVPSGTVSLTIRRPSSRVSGLKEVSSRYDASRWNQWQTRRKRQNQDDEAILQHFDNGDLEAFLHACVVSRLTMLLCGPTGSGKTTMSKTLISAIPPQERLITIEDTLELVIPHDNHVRLLYSKNGAGLGAVSAEHLLQASLRMRPDRILLGEMRDDAAWAYLSEVVSGHPGSISTIHGANPIQGFKKLFSLVKSSVQGASLEDRTLIDMLSTAIDVIIPFRAYEDVYEVGEIWLAADARRRGETIGDLLNQ</sequence>
<geneLocation type="plasmid">
    <name>pTiA6</name>
</geneLocation>
<comment type="function">
    <text evidence="2">Required for the transfer of T-DNA to plants. Couples energy, by means of ATP hydrolysis, to T-DNA transport.</text>
</comment>
<comment type="subcellular location">
    <subcellularLocation>
        <location evidence="3">Cytoplasm</location>
    </subcellularLocation>
</comment>
<comment type="PTM">
    <text>Autophosphorylated.</text>
</comment>
<comment type="similarity">
    <text evidence="3">Belongs to the GSP E family.</text>
</comment>
<name>VIRBB_RHIRD</name>
<accession>P0A3F8</accession>
<accession>P05360</accession>